<accession>Q4L376</accession>
<name>AHPC_STAHJ</name>
<dbReference type="EC" id="1.11.1.26" evidence="1"/>
<dbReference type="EMBL" id="AP006716">
    <property type="protein sequence ID" value="BAE05901.1"/>
    <property type="molecule type" value="Genomic_DNA"/>
</dbReference>
<dbReference type="RefSeq" id="WP_011276838.1">
    <property type="nucleotide sequence ID" value="NC_007168.1"/>
</dbReference>
<dbReference type="SMR" id="Q4L376"/>
<dbReference type="GeneID" id="93781826"/>
<dbReference type="KEGG" id="sha:SH2592"/>
<dbReference type="eggNOG" id="COG0450">
    <property type="taxonomic scope" value="Bacteria"/>
</dbReference>
<dbReference type="HOGENOM" id="CLU_042529_21_3_9"/>
<dbReference type="OrthoDB" id="9812811at2"/>
<dbReference type="Proteomes" id="UP000000543">
    <property type="component" value="Chromosome"/>
</dbReference>
<dbReference type="GO" id="GO:0005829">
    <property type="term" value="C:cytosol"/>
    <property type="evidence" value="ECO:0007669"/>
    <property type="project" value="TreeGrafter"/>
</dbReference>
<dbReference type="GO" id="GO:0102039">
    <property type="term" value="F:NADH-dependent peroxiredoxin activity"/>
    <property type="evidence" value="ECO:0007669"/>
    <property type="project" value="UniProtKB-EC"/>
</dbReference>
<dbReference type="GO" id="GO:0008379">
    <property type="term" value="F:thioredoxin peroxidase activity"/>
    <property type="evidence" value="ECO:0007669"/>
    <property type="project" value="TreeGrafter"/>
</dbReference>
<dbReference type="GO" id="GO:0045454">
    <property type="term" value="P:cell redox homeostasis"/>
    <property type="evidence" value="ECO:0007669"/>
    <property type="project" value="TreeGrafter"/>
</dbReference>
<dbReference type="GO" id="GO:0033554">
    <property type="term" value="P:cellular response to stress"/>
    <property type="evidence" value="ECO:0007669"/>
    <property type="project" value="TreeGrafter"/>
</dbReference>
<dbReference type="GO" id="GO:0042744">
    <property type="term" value="P:hydrogen peroxide catabolic process"/>
    <property type="evidence" value="ECO:0007669"/>
    <property type="project" value="TreeGrafter"/>
</dbReference>
<dbReference type="GO" id="GO:0006979">
    <property type="term" value="P:response to oxidative stress"/>
    <property type="evidence" value="ECO:0007669"/>
    <property type="project" value="InterPro"/>
</dbReference>
<dbReference type="CDD" id="cd03015">
    <property type="entry name" value="PRX_Typ2cys"/>
    <property type="match status" value="1"/>
</dbReference>
<dbReference type="FunFam" id="3.40.30.10:FF:000002">
    <property type="entry name" value="Alkyl hydroperoxide reductase C"/>
    <property type="match status" value="1"/>
</dbReference>
<dbReference type="Gene3D" id="3.40.30.10">
    <property type="entry name" value="Glutaredoxin"/>
    <property type="match status" value="1"/>
</dbReference>
<dbReference type="InterPro" id="IPR017559">
    <property type="entry name" value="AhpC"/>
</dbReference>
<dbReference type="InterPro" id="IPR000866">
    <property type="entry name" value="AhpC/TSA"/>
</dbReference>
<dbReference type="InterPro" id="IPR050217">
    <property type="entry name" value="Peroxiredoxin"/>
</dbReference>
<dbReference type="InterPro" id="IPR024706">
    <property type="entry name" value="Peroxiredoxin_AhpC-typ"/>
</dbReference>
<dbReference type="InterPro" id="IPR019479">
    <property type="entry name" value="Peroxiredoxin_C"/>
</dbReference>
<dbReference type="InterPro" id="IPR036249">
    <property type="entry name" value="Thioredoxin-like_sf"/>
</dbReference>
<dbReference type="InterPro" id="IPR013766">
    <property type="entry name" value="Thioredoxin_domain"/>
</dbReference>
<dbReference type="NCBIfam" id="TIGR03137">
    <property type="entry name" value="AhpC"/>
    <property type="match status" value="1"/>
</dbReference>
<dbReference type="PANTHER" id="PTHR10681:SF121">
    <property type="entry name" value="ALKYL HYDROPEROXIDE REDUCTASE C"/>
    <property type="match status" value="1"/>
</dbReference>
<dbReference type="PANTHER" id="PTHR10681">
    <property type="entry name" value="THIOREDOXIN PEROXIDASE"/>
    <property type="match status" value="1"/>
</dbReference>
<dbReference type="Pfam" id="PF10417">
    <property type="entry name" value="1-cysPrx_C"/>
    <property type="match status" value="1"/>
</dbReference>
<dbReference type="Pfam" id="PF00578">
    <property type="entry name" value="AhpC-TSA"/>
    <property type="match status" value="1"/>
</dbReference>
<dbReference type="PIRSF" id="PIRSF000239">
    <property type="entry name" value="AHPC"/>
    <property type="match status" value="1"/>
</dbReference>
<dbReference type="SUPFAM" id="SSF52833">
    <property type="entry name" value="Thioredoxin-like"/>
    <property type="match status" value="1"/>
</dbReference>
<dbReference type="PROSITE" id="PS51352">
    <property type="entry name" value="THIOREDOXIN_2"/>
    <property type="match status" value="1"/>
</dbReference>
<protein>
    <recommendedName>
        <fullName>Alkyl hydroperoxide reductase C</fullName>
        <ecNumber evidence="1">1.11.1.26</ecNumber>
    </recommendedName>
    <alternativeName>
        <fullName>Peroxiredoxin</fullName>
    </alternativeName>
    <alternativeName>
        <fullName>Thioredoxin peroxidase</fullName>
    </alternativeName>
</protein>
<organism>
    <name type="scientific">Staphylococcus haemolyticus (strain JCSC1435)</name>
    <dbReference type="NCBI Taxonomy" id="279808"/>
    <lineage>
        <taxon>Bacteria</taxon>
        <taxon>Bacillati</taxon>
        <taxon>Bacillota</taxon>
        <taxon>Bacilli</taxon>
        <taxon>Bacillales</taxon>
        <taxon>Staphylococcaceae</taxon>
        <taxon>Staphylococcus</taxon>
    </lineage>
</organism>
<feature type="chain" id="PRO_0000279761" description="Alkyl hydroperoxide reductase C">
    <location>
        <begin position="1"/>
        <end position="189"/>
    </location>
</feature>
<feature type="domain" description="Thioredoxin" evidence="3">
    <location>
        <begin position="2"/>
        <end position="159"/>
    </location>
</feature>
<feature type="active site" description="Cysteine sulfenic acid (-SOH) intermediate" evidence="1">
    <location>
        <position position="49"/>
    </location>
</feature>
<feature type="disulfide bond" description="Interchain (with C-168); in linked form" evidence="1">
    <location>
        <position position="49"/>
    </location>
</feature>
<feature type="disulfide bond" description="Interchain (with C-49); in linked form" evidence="1">
    <location>
        <position position="168"/>
    </location>
</feature>
<proteinExistence type="inferred from homology"/>
<gene>
    <name type="primary">ahpC</name>
    <name type="ordered locus">SH2592</name>
</gene>
<sequence length="189" mass="21047">MSLINKEILPFIAQAYDPKKDEFKEVSQDDLKGSWSVVCFYPADFSFVCPTELEDLQNQYDKLQDLGVNVFSVSTDTHFVHKAWHDHSDAISKIQYQMIGDPSQTITRNFDVLDEEAGLAQRGTFIIDPDGVVQAAEINADGIGRDASTLVNKIKAAQYVRQHPGEVCPAKWEEGSESLQPGLDLVGKI</sequence>
<keyword id="KW-0049">Antioxidant</keyword>
<keyword id="KW-0963">Cytoplasm</keyword>
<keyword id="KW-1015">Disulfide bond</keyword>
<keyword id="KW-0560">Oxidoreductase</keyword>
<keyword id="KW-0575">Peroxidase</keyword>
<keyword id="KW-0676">Redox-active center</keyword>
<reference key="1">
    <citation type="journal article" date="2005" name="J. Bacteriol.">
        <title>Whole-genome sequencing of Staphylococcus haemolyticus uncovers the extreme plasticity of its genome and the evolution of human-colonizing staphylococcal species.</title>
        <authorList>
            <person name="Takeuchi F."/>
            <person name="Watanabe S."/>
            <person name="Baba T."/>
            <person name="Yuzawa H."/>
            <person name="Ito T."/>
            <person name="Morimoto Y."/>
            <person name="Kuroda M."/>
            <person name="Cui L."/>
            <person name="Takahashi M."/>
            <person name="Ankai A."/>
            <person name="Baba S."/>
            <person name="Fukui S."/>
            <person name="Lee J.C."/>
            <person name="Hiramatsu K."/>
        </authorList>
    </citation>
    <scope>NUCLEOTIDE SEQUENCE [LARGE SCALE GENOMIC DNA]</scope>
    <source>
        <strain>JCSC1435</strain>
    </source>
</reference>
<evidence type="ECO:0000250" key="1">
    <source>
        <dbReference type="UniProtKB" id="P0A251"/>
    </source>
</evidence>
<evidence type="ECO:0000250" key="2">
    <source>
        <dbReference type="UniProtKB" id="P0AE08"/>
    </source>
</evidence>
<evidence type="ECO:0000255" key="3">
    <source>
        <dbReference type="PROSITE-ProRule" id="PRU00691"/>
    </source>
</evidence>
<evidence type="ECO:0000305" key="4"/>
<comment type="function">
    <text evidence="1">Thiol-specific peroxidase that catalyzes the reduction of hydrogen peroxide and organic hydroperoxides to water and alcohols, respectively. Plays a role in cell protection against oxidative stress by detoxifying peroxides.</text>
</comment>
<comment type="catalytic activity">
    <reaction evidence="1">
        <text>a hydroperoxide + NADH + H(+) = an alcohol + NAD(+) + H2O</text>
        <dbReference type="Rhea" id="RHEA:62628"/>
        <dbReference type="ChEBI" id="CHEBI:15377"/>
        <dbReference type="ChEBI" id="CHEBI:15378"/>
        <dbReference type="ChEBI" id="CHEBI:30879"/>
        <dbReference type="ChEBI" id="CHEBI:35924"/>
        <dbReference type="ChEBI" id="CHEBI:57540"/>
        <dbReference type="ChEBI" id="CHEBI:57945"/>
        <dbReference type="EC" id="1.11.1.26"/>
    </reaction>
</comment>
<comment type="subunit">
    <text evidence="1">Homodimer; disulfide-linked, upon oxidation. 5 homodimers assemble to form a ring-like decamer.</text>
</comment>
<comment type="subcellular location">
    <subcellularLocation>
        <location evidence="2">Cytoplasm</location>
    </subcellularLocation>
</comment>
<comment type="miscellaneous">
    <text evidence="1">The active site is a conserved redox-active cysteine residue, the peroxidatic cysteine (C(P)), which makes the nucleophilic attack on the peroxide substrate. The peroxide oxidizes the C(P)-SH to cysteine sulfenic acid (C(P)-SOH), which then reacts with another cysteine residue, the resolving cysteine (C(R)), to form a disulfide bridge. The disulfide is subsequently reduced by an appropriate electron donor to complete the catalytic cycle. In this typical 2-Cys peroxiredoxin, C(R) is provided by the other dimeric subunit to form an intersubunit disulfide. The disulfide is subsequently reduced by AhpF.</text>
</comment>
<comment type="similarity">
    <text evidence="4">Belongs to the peroxiredoxin family. AhpC/Prx1 subfamily.</text>
</comment>